<protein>
    <recommendedName>
        <fullName evidence="1">Probable dual-specificity RNA methyltransferase RlmN</fullName>
        <ecNumber evidence="1">2.1.1.192</ecNumber>
    </recommendedName>
    <alternativeName>
        <fullName evidence="1">23S rRNA (adenine(2503)-C(2))-methyltransferase</fullName>
    </alternativeName>
    <alternativeName>
        <fullName evidence="1">23S rRNA m2A2503 methyltransferase</fullName>
    </alternativeName>
    <alternativeName>
        <fullName evidence="1">Ribosomal RNA large subunit methyltransferase N</fullName>
    </alternativeName>
    <alternativeName>
        <fullName evidence="1">tRNA (adenine(37)-C(2))-methyltransferase</fullName>
    </alternativeName>
    <alternativeName>
        <fullName evidence="1">tRNA m2A37 methyltransferase</fullName>
    </alternativeName>
</protein>
<reference key="1">
    <citation type="journal article" date="2000" name="Nucleic Acids Res.">
        <title>Complete genome sequence of the alkaliphilic bacterium Bacillus halodurans and genomic sequence comparison with Bacillus subtilis.</title>
        <authorList>
            <person name="Takami H."/>
            <person name="Nakasone K."/>
            <person name="Takaki Y."/>
            <person name="Maeno G."/>
            <person name="Sasaki R."/>
            <person name="Masui N."/>
            <person name="Fuji F."/>
            <person name="Hirama C."/>
            <person name="Nakamura Y."/>
            <person name="Ogasawara N."/>
            <person name="Kuhara S."/>
            <person name="Horikoshi K."/>
        </authorList>
    </citation>
    <scope>NUCLEOTIDE SEQUENCE [LARGE SCALE GENOMIC DNA]</scope>
    <source>
        <strain>ATCC BAA-125 / DSM 18197 / FERM 7344 / JCM 9153 / C-125</strain>
    </source>
</reference>
<gene>
    <name evidence="1" type="primary">rlmN</name>
    <name type="ordered locus">BH2506</name>
</gene>
<keyword id="KW-0004">4Fe-4S</keyword>
<keyword id="KW-0963">Cytoplasm</keyword>
<keyword id="KW-1015">Disulfide bond</keyword>
<keyword id="KW-0408">Iron</keyword>
<keyword id="KW-0411">Iron-sulfur</keyword>
<keyword id="KW-0479">Metal-binding</keyword>
<keyword id="KW-0489">Methyltransferase</keyword>
<keyword id="KW-1185">Reference proteome</keyword>
<keyword id="KW-0698">rRNA processing</keyword>
<keyword id="KW-0949">S-adenosyl-L-methionine</keyword>
<keyword id="KW-0808">Transferase</keyword>
<keyword id="KW-0819">tRNA processing</keyword>
<sequence>MEQLKVEVDPKQGGDLPSIYTLQFEELEMWLKEQGEPKFRATQIFEWLYEKRVKQFQEMTNLSKDLRAKLEKHFNLTTLKTVTKQQSSDGTIKFLFELHDGYSIETVVMRHNYGNSVCVTTQVGCRLGCTFCASTLGGLKRNLEAGEIVAQVVEAQRAMDEQGERVGSIVVMGIGEPFDNYQALMPFLKTVNHDKGLNIGARHITVSTSGVVPKIYQFADEGLQINFAISLHAPNTELRSKLMPVNRAWPLPKLMDAIRYYIDKTGRRVTFEYGLFGGENDQVEHAEELADLIKDIKCHVNLIPVNYVPERDYVRTPRDQIFAFERTLKERGVNVTIRREQGHDIDAACGQLRAKERKEETR</sequence>
<proteinExistence type="inferred from homology"/>
<evidence type="ECO:0000255" key="1">
    <source>
        <dbReference type="HAMAP-Rule" id="MF_01849"/>
    </source>
</evidence>
<evidence type="ECO:0000255" key="2">
    <source>
        <dbReference type="PROSITE-ProRule" id="PRU01266"/>
    </source>
</evidence>
<feature type="chain" id="PRO_0000350034" description="Probable dual-specificity RNA methyltransferase RlmN">
    <location>
        <begin position="1"/>
        <end position="362"/>
    </location>
</feature>
<feature type="domain" description="Radical SAM core" evidence="2">
    <location>
        <begin position="111"/>
        <end position="344"/>
    </location>
</feature>
<feature type="active site" description="Proton acceptor" evidence="1">
    <location>
        <position position="105"/>
    </location>
</feature>
<feature type="active site" description="S-methylcysteine intermediate" evidence="1">
    <location>
        <position position="349"/>
    </location>
</feature>
<feature type="binding site" evidence="1">
    <location>
        <position position="125"/>
    </location>
    <ligand>
        <name>[4Fe-4S] cluster</name>
        <dbReference type="ChEBI" id="CHEBI:49883"/>
        <note>4Fe-4S-S-AdoMet</note>
    </ligand>
</feature>
<feature type="binding site" evidence="1">
    <location>
        <position position="129"/>
    </location>
    <ligand>
        <name>[4Fe-4S] cluster</name>
        <dbReference type="ChEBI" id="CHEBI:49883"/>
        <note>4Fe-4S-S-AdoMet</note>
    </ligand>
</feature>
<feature type="binding site" evidence="1">
    <location>
        <position position="132"/>
    </location>
    <ligand>
        <name>[4Fe-4S] cluster</name>
        <dbReference type="ChEBI" id="CHEBI:49883"/>
        <note>4Fe-4S-S-AdoMet</note>
    </ligand>
</feature>
<feature type="binding site" evidence="1">
    <location>
        <begin position="175"/>
        <end position="176"/>
    </location>
    <ligand>
        <name>S-adenosyl-L-methionine</name>
        <dbReference type="ChEBI" id="CHEBI:59789"/>
    </ligand>
</feature>
<feature type="binding site" evidence="1">
    <location>
        <position position="207"/>
    </location>
    <ligand>
        <name>S-adenosyl-L-methionine</name>
        <dbReference type="ChEBI" id="CHEBI:59789"/>
    </ligand>
</feature>
<feature type="binding site" evidence="1">
    <location>
        <begin position="230"/>
        <end position="232"/>
    </location>
    <ligand>
        <name>S-adenosyl-L-methionine</name>
        <dbReference type="ChEBI" id="CHEBI:59789"/>
    </ligand>
</feature>
<feature type="binding site" evidence="1">
    <location>
        <position position="306"/>
    </location>
    <ligand>
        <name>S-adenosyl-L-methionine</name>
        <dbReference type="ChEBI" id="CHEBI:59789"/>
    </ligand>
</feature>
<feature type="disulfide bond" description="(transient)" evidence="1">
    <location>
        <begin position="118"/>
        <end position="349"/>
    </location>
</feature>
<organism>
    <name type="scientific">Halalkalibacterium halodurans (strain ATCC BAA-125 / DSM 18197 / FERM 7344 / JCM 9153 / C-125)</name>
    <name type="common">Bacillus halodurans</name>
    <dbReference type="NCBI Taxonomy" id="272558"/>
    <lineage>
        <taxon>Bacteria</taxon>
        <taxon>Bacillati</taxon>
        <taxon>Bacillota</taxon>
        <taxon>Bacilli</taxon>
        <taxon>Bacillales</taxon>
        <taxon>Bacillaceae</taxon>
        <taxon>Halalkalibacterium (ex Joshi et al. 2022)</taxon>
    </lineage>
</organism>
<comment type="function">
    <text evidence="1">Specifically methylates position 2 of adenine 2503 in 23S rRNA and position 2 of adenine 37 in tRNAs.</text>
</comment>
<comment type="catalytic activity">
    <reaction evidence="1">
        <text>adenosine(2503) in 23S rRNA + 2 reduced [2Fe-2S]-[ferredoxin] + 2 S-adenosyl-L-methionine = 2-methyladenosine(2503) in 23S rRNA + 5'-deoxyadenosine + L-methionine + 2 oxidized [2Fe-2S]-[ferredoxin] + S-adenosyl-L-homocysteine</text>
        <dbReference type="Rhea" id="RHEA:42916"/>
        <dbReference type="Rhea" id="RHEA-COMP:10000"/>
        <dbReference type="Rhea" id="RHEA-COMP:10001"/>
        <dbReference type="Rhea" id="RHEA-COMP:10152"/>
        <dbReference type="Rhea" id="RHEA-COMP:10282"/>
        <dbReference type="ChEBI" id="CHEBI:17319"/>
        <dbReference type="ChEBI" id="CHEBI:33737"/>
        <dbReference type="ChEBI" id="CHEBI:33738"/>
        <dbReference type="ChEBI" id="CHEBI:57844"/>
        <dbReference type="ChEBI" id="CHEBI:57856"/>
        <dbReference type="ChEBI" id="CHEBI:59789"/>
        <dbReference type="ChEBI" id="CHEBI:74411"/>
        <dbReference type="ChEBI" id="CHEBI:74497"/>
        <dbReference type="EC" id="2.1.1.192"/>
    </reaction>
</comment>
<comment type="catalytic activity">
    <reaction evidence="1">
        <text>adenosine(37) in tRNA + 2 reduced [2Fe-2S]-[ferredoxin] + 2 S-adenosyl-L-methionine = 2-methyladenosine(37) in tRNA + 5'-deoxyadenosine + L-methionine + 2 oxidized [2Fe-2S]-[ferredoxin] + S-adenosyl-L-homocysteine</text>
        <dbReference type="Rhea" id="RHEA:43332"/>
        <dbReference type="Rhea" id="RHEA-COMP:10000"/>
        <dbReference type="Rhea" id="RHEA-COMP:10001"/>
        <dbReference type="Rhea" id="RHEA-COMP:10162"/>
        <dbReference type="Rhea" id="RHEA-COMP:10485"/>
        <dbReference type="ChEBI" id="CHEBI:17319"/>
        <dbReference type="ChEBI" id="CHEBI:33737"/>
        <dbReference type="ChEBI" id="CHEBI:33738"/>
        <dbReference type="ChEBI" id="CHEBI:57844"/>
        <dbReference type="ChEBI" id="CHEBI:57856"/>
        <dbReference type="ChEBI" id="CHEBI:59789"/>
        <dbReference type="ChEBI" id="CHEBI:74411"/>
        <dbReference type="ChEBI" id="CHEBI:74497"/>
        <dbReference type="EC" id="2.1.1.192"/>
    </reaction>
</comment>
<comment type="cofactor">
    <cofactor evidence="1">
        <name>[4Fe-4S] cluster</name>
        <dbReference type="ChEBI" id="CHEBI:49883"/>
    </cofactor>
    <text evidence="1">Binds 1 [4Fe-4S] cluster. The cluster is coordinated with 3 cysteines and an exchangeable S-adenosyl-L-methionine.</text>
</comment>
<comment type="subcellular location">
    <subcellularLocation>
        <location evidence="1">Cytoplasm</location>
    </subcellularLocation>
</comment>
<comment type="miscellaneous">
    <text evidence="1">Reaction proceeds by a ping-pong mechanism involving intermediate methylation of a conserved cysteine residue.</text>
</comment>
<comment type="similarity">
    <text evidence="1">Belongs to the radical SAM superfamily. RlmN family.</text>
</comment>
<dbReference type="EC" id="2.1.1.192" evidence="1"/>
<dbReference type="EMBL" id="BA000004">
    <property type="protein sequence ID" value="BAB06225.1"/>
    <property type="molecule type" value="Genomic_DNA"/>
</dbReference>
<dbReference type="PIR" id="B83963">
    <property type="entry name" value="B83963"/>
</dbReference>
<dbReference type="RefSeq" id="WP_010898657.1">
    <property type="nucleotide sequence ID" value="NC_002570.2"/>
</dbReference>
<dbReference type="SMR" id="Q9K9Y8"/>
<dbReference type="STRING" id="272558.gene:10728404"/>
<dbReference type="DNASU" id="891443"/>
<dbReference type="GeneID" id="87598026"/>
<dbReference type="KEGG" id="bha:BH2506"/>
<dbReference type="eggNOG" id="COG0820">
    <property type="taxonomic scope" value="Bacteria"/>
</dbReference>
<dbReference type="HOGENOM" id="CLU_029101_0_1_9"/>
<dbReference type="OrthoDB" id="9793973at2"/>
<dbReference type="Proteomes" id="UP000001258">
    <property type="component" value="Chromosome"/>
</dbReference>
<dbReference type="GO" id="GO:0005737">
    <property type="term" value="C:cytoplasm"/>
    <property type="evidence" value="ECO:0007669"/>
    <property type="project" value="UniProtKB-SubCell"/>
</dbReference>
<dbReference type="GO" id="GO:0051539">
    <property type="term" value="F:4 iron, 4 sulfur cluster binding"/>
    <property type="evidence" value="ECO:0007669"/>
    <property type="project" value="UniProtKB-UniRule"/>
</dbReference>
<dbReference type="GO" id="GO:0046872">
    <property type="term" value="F:metal ion binding"/>
    <property type="evidence" value="ECO:0007669"/>
    <property type="project" value="UniProtKB-KW"/>
</dbReference>
<dbReference type="GO" id="GO:0070040">
    <property type="term" value="F:rRNA (adenine(2503)-C2-)-methyltransferase activity"/>
    <property type="evidence" value="ECO:0007669"/>
    <property type="project" value="UniProtKB-UniRule"/>
</dbReference>
<dbReference type="GO" id="GO:0019843">
    <property type="term" value="F:rRNA binding"/>
    <property type="evidence" value="ECO:0007669"/>
    <property type="project" value="UniProtKB-UniRule"/>
</dbReference>
<dbReference type="GO" id="GO:0002935">
    <property type="term" value="F:tRNA (adenine(37)-C2)-methyltransferase activity"/>
    <property type="evidence" value="ECO:0007669"/>
    <property type="project" value="UniProtKB-UniRule"/>
</dbReference>
<dbReference type="GO" id="GO:0000049">
    <property type="term" value="F:tRNA binding"/>
    <property type="evidence" value="ECO:0007669"/>
    <property type="project" value="UniProtKB-UniRule"/>
</dbReference>
<dbReference type="GO" id="GO:0070475">
    <property type="term" value="P:rRNA base methylation"/>
    <property type="evidence" value="ECO:0007669"/>
    <property type="project" value="UniProtKB-UniRule"/>
</dbReference>
<dbReference type="GO" id="GO:0030488">
    <property type="term" value="P:tRNA methylation"/>
    <property type="evidence" value="ECO:0007669"/>
    <property type="project" value="UniProtKB-UniRule"/>
</dbReference>
<dbReference type="CDD" id="cd01335">
    <property type="entry name" value="Radical_SAM"/>
    <property type="match status" value="1"/>
</dbReference>
<dbReference type="FunFam" id="3.20.20.70:FF:000014">
    <property type="entry name" value="Probable dual-specificity RNA methyltransferase RlmN"/>
    <property type="match status" value="1"/>
</dbReference>
<dbReference type="Gene3D" id="1.10.150.530">
    <property type="match status" value="1"/>
</dbReference>
<dbReference type="Gene3D" id="3.20.20.70">
    <property type="entry name" value="Aldolase class I"/>
    <property type="match status" value="1"/>
</dbReference>
<dbReference type="HAMAP" id="MF_01849">
    <property type="entry name" value="RNA_methyltr_RlmN"/>
    <property type="match status" value="1"/>
</dbReference>
<dbReference type="InterPro" id="IPR013785">
    <property type="entry name" value="Aldolase_TIM"/>
</dbReference>
<dbReference type="InterPro" id="IPR040072">
    <property type="entry name" value="Methyltransferase_A"/>
</dbReference>
<dbReference type="InterPro" id="IPR048641">
    <property type="entry name" value="RlmN_N"/>
</dbReference>
<dbReference type="InterPro" id="IPR027492">
    <property type="entry name" value="RNA_MTrfase_RlmN"/>
</dbReference>
<dbReference type="InterPro" id="IPR004383">
    <property type="entry name" value="rRNA_lsu_MTrfase_RlmN/Cfr"/>
</dbReference>
<dbReference type="InterPro" id="IPR007197">
    <property type="entry name" value="rSAM"/>
</dbReference>
<dbReference type="NCBIfam" id="TIGR00048">
    <property type="entry name" value="rRNA_mod_RlmN"/>
    <property type="match status" value="1"/>
</dbReference>
<dbReference type="PANTHER" id="PTHR30544">
    <property type="entry name" value="23S RRNA METHYLTRANSFERASE"/>
    <property type="match status" value="1"/>
</dbReference>
<dbReference type="PANTHER" id="PTHR30544:SF5">
    <property type="entry name" value="RADICAL SAM CORE DOMAIN-CONTAINING PROTEIN"/>
    <property type="match status" value="1"/>
</dbReference>
<dbReference type="Pfam" id="PF04055">
    <property type="entry name" value="Radical_SAM"/>
    <property type="match status" value="1"/>
</dbReference>
<dbReference type="Pfam" id="PF21016">
    <property type="entry name" value="RlmN_N"/>
    <property type="match status" value="1"/>
</dbReference>
<dbReference type="PIRSF" id="PIRSF006004">
    <property type="entry name" value="CHP00048"/>
    <property type="match status" value="1"/>
</dbReference>
<dbReference type="SFLD" id="SFLDF00275">
    <property type="entry name" value="adenosine_C2_methyltransferase"/>
    <property type="match status" value="1"/>
</dbReference>
<dbReference type="SFLD" id="SFLDG01062">
    <property type="entry name" value="methyltransferase_(Class_A)"/>
    <property type="match status" value="1"/>
</dbReference>
<dbReference type="SUPFAM" id="SSF102114">
    <property type="entry name" value="Radical SAM enzymes"/>
    <property type="match status" value="1"/>
</dbReference>
<dbReference type="PROSITE" id="PS51918">
    <property type="entry name" value="RADICAL_SAM"/>
    <property type="match status" value="1"/>
</dbReference>
<name>RLMN_HALH5</name>
<accession>Q9K9Y8</accession>